<proteinExistence type="inferred from homology"/>
<evidence type="ECO:0000255" key="1">
    <source>
        <dbReference type="HAMAP-Rule" id="MF_00685"/>
    </source>
</evidence>
<protein>
    <recommendedName>
        <fullName evidence="1">1,4-alpha-glucan branching enzyme GlgB</fullName>
        <ecNumber evidence="1">2.4.1.18</ecNumber>
    </recommendedName>
    <alternativeName>
        <fullName evidence="1">1,4-alpha-D-glucan:1,4-alpha-D-glucan 6-glucosyl-transferase</fullName>
    </alternativeName>
    <alternativeName>
        <fullName evidence="1">Alpha-(1-&gt;4)-glucan branching enzyme</fullName>
    </alternativeName>
    <alternativeName>
        <fullName evidence="1">Glycogen branching enzyme</fullName>
        <shortName evidence="1">BE</shortName>
    </alternativeName>
</protein>
<reference key="1">
    <citation type="journal article" date="2005" name="Arch. Microbiol.">
        <title>The genome sequence of an anaerobic aromatic-degrading denitrifying bacterium, strain EbN1.</title>
        <authorList>
            <person name="Rabus R."/>
            <person name="Kube M."/>
            <person name="Heider J."/>
            <person name="Beck A."/>
            <person name="Heitmann K."/>
            <person name="Widdel F."/>
            <person name="Reinhardt R."/>
        </authorList>
    </citation>
    <scope>NUCLEOTIDE SEQUENCE [LARGE SCALE GENOMIC DNA]</scope>
    <source>
        <strain>DSM 19018 / LMG 30748 / EbN1</strain>
    </source>
</reference>
<sequence>MDATTTHSRLSEHDIYLFREGSHGRLYDKLGCQLDEAGAHFAVWAPNARAVAVIGSFNAWRDDAAVLRPRDDGSGIWEGFVAGVAAGDVYKYSIVCQDGRVAEKADPFAQYAEVPPATGSRAWRSAHRWADDAWMAGRARANALDAPFSIYELHLGSWRRAQDGALPGYREIAPQLAAYVVEWGFTHVELMPLSEHPFYGSWGYQTTGYFAATARYGTPDDLMFLIDTLHQAGVGVILDWVPSHFPSDAHGLAEFDGTYLYEHADPRQGFHPEWHSCIFNYGRHEVCAFLLSSALFWLERFHIDGLRVDAVASMLYLDYGRQHGEWVPNRYGGRENLDAVAFLRRLNEAVYRDHPGVQTIAEESTAWPMVSRPLYVGGLGFGMKWNMGWMHDSLDYFRHDPLFRKFHHGRITFSIWYAFHENFVLPLSHDEVVYGKGSLIGKMPGDSWQQFAGLRALFGYMWAHPGKKLLFMGGEFGQRREWTHEGELEWWVLDRPEHAGLRHWVGDLNRLYRERAALHELDFDEAGFQWIDSDDSENSVLSFLRKSRNGATVLVICNFTPVTRPNYTLGVPRAGFWREALNSDATLYGGSGAGNLGGVETVPVPAHGHYQSLTLTLPPLAVLFLIPEVDDARPDS</sequence>
<comment type="function">
    <text evidence="1">Catalyzes the formation of the alpha-1,6-glucosidic linkages in glycogen by scission of a 1,4-alpha-linked oligosaccharide from growing alpha-1,4-glucan chains and the subsequent attachment of the oligosaccharide to the alpha-1,6 position.</text>
</comment>
<comment type="catalytic activity">
    <reaction evidence="1">
        <text>Transfers a segment of a (1-&gt;4)-alpha-D-glucan chain to a primary hydroxy group in a similar glucan chain.</text>
        <dbReference type="EC" id="2.4.1.18"/>
    </reaction>
</comment>
<comment type="pathway">
    <text evidence="1">Glycan biosynthesis; glycogen biosynthesis.</text>
</comment>
<comment type="subunit">
    <text evidence="1">Monomer.</text>
</comment>
<comment type="similarity">
    <text evidence="1">Belongs to the glycosyl hydrolase 13 family. GlgB subfamily.</text>
</comment>
<gene>
    <name evidence="1" type="primary">glgB</name>
    <name type="ordered locus">AZOSEA39820</name>
    <name type="ORF">ebA7003</name>
</gene>
<name>GLGB_AROAE</name>
<keyword id="KW-0119">Carbohydrate metabolism</keyword>
<keyword id="KW-0320">Glycogen biosynthesis</keyword>
<keyword id="KW-0321">Glycogen metabolism</keyword>
<keyword id="KW-0328">Glycosyltransferase</keyword>
<keyword id="KW-1185">Reference proteome</keyword>
<keyword id="KW-0808">Transferase</keyword>
<dbReference type="EC" id="2.4.1.18" evidence="1"/>
<dbReference type="EMBL" id="CR555306">
    <property type="protein sequence ID" value="CAI10107.1"/>
    <property type="molecule type" value="Genomic_DNA"/>
</dbReference>
<dbReference type="RefSeq" id="WP_041646623.1">
    <property type="nucleotide sequence ID" value="NC_006513.1"/>
</dbReference>
<dbReference type="SMR" id="Q5NXV7"/>
<dbReference type="STRING" id="76114.ebA7003"/>
<dbReference type="CAZy" id="CBM48">
    <property type="family name" value="Carbohydrate-Binding Module Family 48"/>
</dbReference>
<dbReference type="CAZy" id="GH13">
    <property type="family name" value="Glycoside Hydrolase Family 13"/>
</dbReference>
<dbReference type="KEGG" id="eba:ebA7003"/>
<dbReference type="eggNOG" id="COG0296">
    <property type="taxonomic scope" value="Bacteria"/>
</dbReference>
<dbReference type="HOGENOM" id="CLU_004245_3_2_4"/>
<dbReference type="OrthoDB" id="9800174at2"/>
<dbReference type="UniPathway" id="UPA00164"/>
<dbReference type="Proteomes" id="UP000006552">
    <property type="component" value="Chromosome"/>
</dbReference>
<dbReference type="GO" id="GO:0005829">
    <property type="term" value="C:cytosol"/>
    <property type="evidence" value="ECO:0007669"/>
    <property type="project" value="TreeGrafter"/>
</dbReference>
<dbReference type="GO" id="GO:0003844">
    <property type="term" value="F:1,4-alpha-glucan branching enzyme activity"/>
    <property type="evidence" value="ECO:0007669"/>
    <property type="project" value="UniProtKB-UniRule"/>
</dbReference>
<dbReference type="GO" id="GO:0043169">
    <property type="term" value="F:cation binding"/>
    <property type="evidence" value="ECO:0007669"/>
    <property type="project" value="InterPro"/>
</dbReference>
<dbReference type="GO" id="GO:0004553">
    <property type="term" value="F:hydrolase activity, hydrolyzing O-glycosyl compounds"/>
    <property type="evidence" value="ECO:0007669"/>
    <property type="project" value="InterPro"/>
</dbReference>
<dbReference type="GO" id="GO:0005978">
    <property type="term" value="P:glycogen biosynthetic process"/>
    <property type="evidence" value="ECO:0007669"/>
    <property type="project" value="UniProtKB-UniRule"/>
</dbReference>
<dbReference type="CDD" id="cd11322">
    <property type="entry name" value="AmyAc_Glg_BE"/>
    <property type="match status" value="1"/>
</dbReference>
<dbReference type="CDD" id="cd02855">
    <property type="entry name" value="E_set_GBE_prok_N"/>
    <property type="match status" value="1"/>
</dbReference>
<dbReference type="FunFam" id="2.60.40.1180:FF:000002">
    <property type="entry name" value="1,4-alpha-glucan branching enzyme GlgB"/>
    <property type="match status" value="1"/>
</dbReference>
<dbReference type="FunFam" id="3.20.20.80:FF:000003">
    <property type="entry name" value="1,4-alpha-glucan branching enzyme GlgB"/>
    <property type="match status" value="1"/>
</dbReference>
<dbReference type="Gene3D" id="3.20.20.80">
    <property type="entry name" value="Glycosidases"/>
    <property type="match status" value="1"/>
</dbReference>
<dbReference type="Gene3D" id="2.60.40.1180">
    <property type="entry name" value="Golgi alpha-mannosidase II"/>
    <property type="match status" value="1"/>
</dbReference>
<dbReference type="Gene3D" id="2.60.40.10">
    <property type="entry name" value="Immunoglobulins"/>
    <property type="match status" value="1"/>
</dbReference>
<dbReference type="HAMAP" id="MF_00685">
    <property type="entry name" value="GlgB"/>
    <property type="match status" value="1"/>
</dbReference>
<dbReference type="InterPro" id="IPR006048">
    <property type="entry name" value="A-amylase/branching_C"/>
</dbReference>
<dbReference type="InterPro" id="IPR037439">
    <property type="entry name" value="Branching_enzy"/>
</dbReference>
<dbReference type="InterPro" id="IPR006407">
    <property type="entry name" value="GlgB"/>
</dbReference>
<dbReference type="InterPro" id="IPR044143">
    <property type="entry name" value="GlgB_N_E_set_prok"/>
</dbReference>
<dbReference type="InterPro" id="IPR006047">
    <property type="entry name" value="Glyco_hydro_13_cat_dom"/>
</dbReference>
<dbReference type="InterPro" id="IPR004193">
    <property type="entry name" value="Glyco_hydro_13_N"/>
</dbReference>
<dbReference type="InterPro" id="IPR013780">
    <property type="entry name" value="Glyco_hydro_b"/>
</dbReference>
<dbReference type="InterPro" id="IPR017853">
    <property type="entry name" value="Glycoside_hydrolase_SF"/>
</dbReference>
<dbReference type="InterPro" id="IPR013783">
    <property type="entry name" value="Ig-like_fold"/>
</dbReference>
<dbReference type="InterPro" id="IPR014756">
    <property type="entry name" value="Ig_E-set"/>
</dbReference>
<dbReference type="NCBIfam" id="TIGR01515">
    <property type="entry name" value="branching_enzym"/>
    <property type="match status" value="1"/>
</dbReference>
<dbReference type="NCBIfam" id="NF003811">
    <property type="entry name" value="PRK05402.1"/>
    <property type="match status" value="1"/>
</dbReference>
<dbReference type="NCBIfam" id="NF008967">
    <property type="entry name" value="PRK12313.1"/>
    <property type="match status" value="1"/>
</dbReference>
<dbReference type="PANTHER" id="PTHR43651">
    <property type="entry name" value="1,4-ALPHA-GLUCAN-BRANCHING ENZYME"/>
    <property type="match status" value="1"/>
</dbReference>
<dbReference type="PANTHER" id="PTHR43651:SF3">
    <property type="entry name" value="1,4-ALPHA-GLUCAN-BRANCHING ENZYME"/>
    <property type="match status" value="1"/>
</dbReference>
<dbReference type="Pfam" id="PF00128">
    <property type="entry name" value="Alpha-amylase"/>
    <property type="match status" value="1"/>
</dbReference>
<dbReference type="Pfam" id="PF02806">
    <property type="entry name" value="Alpha-amylase_C"/>
    <property type="match status" value="1"/>
</dbReference>
<dbReference type="Pfam" id="PF02922">
    <property type="entry name" value="CBM_48"/>
    <property type="match status" value="1"/>
</dbReference>
<dbReference type="PIRSF" id="PIRSF000463">
    <property type="entry name" value="GlgB"/>
    <property type="match status" value="1"/>
</dbReference>
<dbReference type="SMART" id="SM00642">
    <property type="entry name" value="Aamy"/>
    <property type="match status" value="1"/>
</dbReference>
<dbReference type="SUPFAM" id="SSF51445">
    <property type="entry name" value="(Trans)glycosidases"/>
    <property type="match status" value="1"/>
</dbReference>
<dbReference type="SUPFAM" id="SSF81296">
    <property type="entry name" value="E set domains"/>
    <property type="match status" value="1"/>
</dbReference>
<dbReference type="SUPFAM" id="SSF51011">
    <property type="entry name" value="Glycosyl hydrolase domain"/>
    <property type="match status" value="1"/>
</dbReference>
<feature type="chain" id="PRO_0000188674" description="1,4-alpha-glucan branching enzyme GlgB">
    <location>
        <begin position="1"/>
        <end position="636"/>
    </location>
</feature>
<feature type="active site" description="Nucleophile" evidence="1">
    <location>
        <position position="309"/>
    </location>
</feature>
<feature type="active site" description="Proton donor" evidence="1">
    <location>
        <position position="362"/>
    </location>
</feature>
<organism>
    <name type="scientific">Aromatoleum aromaticum (strain DSM 19018 / LMG 30748 / EbN1)</name>
    <name type="common">Azoarcus sp. (strain EbN1)</name>
    <dbReference type="NCBI Taxonomy" id="76114"/>
    <lineage>
        <taxon>Bacteria</taxon>
        <taxon>Pseudomonadati</taxon>
        <taxon>Pseudomonadota</taxon>
        <taxon>Betaproteobacteria</taxon>
        <taxon>Rhodocyclales</taxon>
        <taxon>Rhodocyclaceae</taxon>
        <taxon>Aromatoleum</taxon>
    </lineage>
</organism>
<accession>Q5NXV7</accession>